<proteinExistence type="inferred from homology"/>
<keyword id="KW-0067">ATP-binding</keyword>
<keyword id="KW-0131">Cell cycle</keyword>
<keyword id="KW-0132">Cell division</keyword>
<keyword id="KW-0133">Cell shape</keyword>
<keyword id="KW-0961">Cell wall biogenesis/degradation</keyword>
<keyword id="KW-0963">Cytoplasm</keyword>
<keyword id="KW-0436">Ligase</keyword>
<keyword id="KW-0547">Nucleotide-binding</keyword>
<keyword id="KW-0573">Peptidoglycan synthesis</keyword>
<reference key="1">
    <citation type="journal article" date="2006" name="Proc. Natl. Acad. Sci. U.S.A.">
        <title>Molecular genetic anatomy of inter- and intraserotype variation in the human bacterial pathogen group A Streptococcus.</title>
        <authorList>
            <person name="Beres S.B."/>
            <person name="Richter E.W."/>
            <person name="Nagiec M.J."/>
            <person name="Sumby P."/>
            <person name="Porcella S.F."/>
            <person name="DeLeo F.R."/>
            <person name="Musser J.M."/>
        </authorList>
    </citation>
    <scope>NUCLEOTIDE SEQUENCE [LARGE SCALE GENOMIC DNA]</scope>
    <source>
        <strain>MGAS10270</strain>
    </source>
</reference>
<accession>Q1JIH1</accession>
<organism>
    <name type="scientific">Streptococcus pyogenes serotype M2 (strain MGAS10270)</name>
    <dbReference type="NCBI Taxonomy" id="370552"/>
    <lineage>
        <taxon>Bacteria</taxon>
        <taxon>Bacillati</taxon>
        <taxon>Bacillota</taxon>
        <taxon>Bacilli</taxon>
        <taxon>Lactobacillales</taxon>
        <taxon>Streptococcaceae</taxon>
        <taxon>Streptococcus</taxon>
    </lineage>
</organism>
<dbReference type="EC" id="6.3.2.8" evidence="1"/>
<dbReference type="EMBL" id="CP000260">
    <property type="protein sequence ID" value="ABF33352.1"/>
    <property type="molecule type" value="Genomic_DNA"/>
</dbReference>
<dbReference type="SMR" id="Q1JIH1"/>
<dbReference type="KEGG" id="sph:MGAS10270_Spy0287"/>
<dbReference type="HOGENOM" id="CLU_028104_1_0_9"/>
<dbReference type="UniPathway" id="UPA00219"/>
<dbReference type="Proteomes" id="UP000002436">
    <property type="component" value="Chromosome"/>
</dbReference>
<dbReference type="GO" id="GO:0005737">
    <property type="term" value="C:cytoplasm"/>
    <property type="evidence" value="ECO:0007669"/>
    <property type="project" value="UniProtKB-SubCell"/>
</dbReference>
<dbReference type="GO" id="GO:0005524">
    <property type="term" value="F:ATP binding"/>
    <property type="evidence" value="ECO:0007669"/>
    <property type="project" value="UniProtKB-UniRule"/>
</dbReference>
<dbReference type="GO" id="GO:0008763">
    <property type="term" value="F:UDP-N-acetylmuramate-L-alanine ligase activity"/>
    <property type="evidence" value="ECO:0007669"/>
    <property type="project" value="UniProtKB-UniRule"/>
</dbReference>
<dbReference type="GO" id="GO:0051301">
    <property type="term" value="P:cell division"/>
    <property type="evidence" value="ECO:0007669"/>
    <property type="project" value="UniProtKB-KW"/>
</dbReference>
<dbReference type="GO" id="GO:0071555">
    <property type="term" value="P:cell wall organization"/>
    <property type="evidence" value="ECO:0007669"/>
    <property type="project" value="UniProtKB-KW"/>
</dbReference>
<dbReference type="GO" id="GO:0009252">
    <property type="term" value="P:peptidoglycan biosynthetic process"/>
    <property type="evidence" value="ECO:0007669"/>
    <property type="project" value="UniProtKB-UniRule"/>
</dbReference>
<dbReference type="GO" id="GO:0008360">
    <property type="term" value="P:regulation of cell shape"/>
    <property type="evidence" value="ECO:0007669"/>
    <property type="project" value="UniProtKB-KW"/>
</dbReference>
<dbReference type="Gene3D" id="3.90.190.20">
    <property type="entry name" value="Mur ligase, C-terminal domain"/>
    <property type="match status" value="1"/>
</dbReference>
<dbReference type="Gene3D" id="3.40.1190.10">
    <property type="entry name" value="Mur-like, catalytic domain"/>
    <property type="match status" value="1"/>
</dbReference>
<dbReference type="Gene3D" id="3.40.50.720">
    <property type="entry name" value="NAD(P)-binding Rossmann-like Domain"/>
    <property type="match status" value="1"/>
</dbReference>
<dbReference type="HAMAP" id="MF_00046">
    <property type="entry name" value="MurC"/>
    <property type="match status" value="1"/>
</dbReference>
<dbReference type="InterPro" id="IPR036565">
    <property type="entry name" value="Mur-like_cat_sf"/>
</dbReference>
<dbReference type="InterPro" id="IPR004101">
    <property type="entry name" value="Mur_ligase_C"/>
</dbReference>
<dbReference type="InterPro" id="IPR036615">
    <property type="entry name" value="Mur_ligase_C_dom_sf"/>
</dbReference>
<dbReference type="InterPro" id="IPR013221">
    <property type="entry name" value="Mur_ligase_cen"/>
</dbReference>
<dbReference type="InterPro" id="IPR000713">
    <property type="entry name" value="Mur_ligase_N"/>
</dbReference>
<dbReference type="InterPro" id="IPR050061">
    <property type="entry name" value="MurCDEF_pg_biosynth"/>
</dbReference>
<dbReference type="InterPro" id="IPR005758">
    <property type="entry name" value="UDP-N-AcMur_Ala_ligase_MurC"/>
</dbReference>
<dbReference type="NCBIfam" id="TIGR01082">
    <property type="entry name" value="murC"/>
    <property type="match status" value="1"/>
</dbReference>
<dbReference type="PANTHER" id="PTHR43445:SF3">
    <property type="entry name" value="UDP-N-ACETYLMURAMATE--L-ALANINE LIGASE"/>
    <property type="match status" value="1"/>
</dbReference>
<dbReference type="PANTHER" id="PTHR43445">
    <property type="entry name" value="UDP-N-ACETYLMURAMATE--L-ALANINE LIGASE-RELATED"/>
    <property type="match status" value="1"/>
</dbReference>
<dbReference type="Pfam" id="PF01225">
    <property type="entry name" value="Mur_ligase"/>
    <property type="match status" value="1"/>
</dbReference>
<dbReference type="Pfam" id="PF02875">
    <property type="entry name" value="Mur_ligase_C"/>
    <property type="match status" value="1"/>
</dbReference>
<dbReference type="Pfam" id="PF08245">
    <property type="entry name" value="Mur_ligase_M"/>
    <property type="match status" value="1"/>
</dbReference>
<dbReference type="SUPFAM" id="SSF51984">
    <property type="entry name" value="MurCD N-terminal domain"/>
    <property type="match status" value="1"/>
</dbReference>
<dbReference type="SUPFAM" id="SSF53623">
    <property type="entry name" value="MurD-like peptide ligases, catalytic domain"/>
    <property type="match status" value="1"/>
</dbReference>
<dbReference type="SUPFAM" id="SSF53244">
    <property type="entry name" value="MurD-like peptide ligases, peptide-binding domain"/>
    <property type="match status" value="1"/>
</dbReference>
<name>MURC_STRPD</name>
<comment type="function">
    <text evidence="1">Cell wall formation.</text>
</comment>
<comment type="catalytic activity">
    <reaction evidence="1">
        <text>UDP-N-acetyl-alpha-D-muramate + L-alanine + ATP = UDP-N-acetyl-alpha-D-muramoyl-L-alanine + ADP + phosphate + H(+)</text>
        <dbReference type="Rhea" id="RHEA:23372"/>
        <dbReference type="ChEBI" id="CHEBI:15378"/>
        <dbReference type="ChEBI" id="CHEBI:30616"/>
        <dbReference type="ChEBI" id="CHEBI:43474"/>
        <dbReference type="ChEBI" id="CHEBI:57972"/>
        <dbReference type="ChEBI" id="CHEBI:70757"/>
        <dbReference type="ChEBI" id="CHEBI:83898"/>
        <dbReference type="ChEBI" id="CHEBI:456216"/>
        <dbReference type="EC" id="6.3.2.8"/>
    </reaction>
</comment>
<comment type="pathway">
    <text evidence="1">Cell wall biogenesis; peptidoglycan biosynthesis.</text>
</comment>
<comment type="subcellular location">
    <subcellularLocation>
        <location evidence="1">Cytoplasm</location>
    </subcellularLocation>
</comment>
<comment type="similarity">
    <text evidence="1">Belongs to the MurCDEF family.</text>
</comment>
<evidence type="ECO:0000255" key="1">
    <source>
        <dbReference type="HAMAP-Rule" id="MF_00046"/>
    </source>
</evidence>
<protein>
    <recommendedName>
        <fullName evidence="1">UDP-N-acetylmuramate--L-alanine ligase</fullName>
        <ecNumber evidence="1">6.3.2.8</ecNumber>
    </recommendedName>
    <alternativeName>
        <fullName evidence="1">UDP-N-acetylmuramoyl-L-alanine synthetase</fullName>
    </alternativeName>
</protein>
<feature type="chain" id="PRO_1000004423" description="UDP-N-acetylmuramate--L-alanine ligase">
    <location>
        <begin position="1"/>
        <end position="442"/>
    </location>
</feature>
<feature type="binding site" evidence="1">
    <location>
        <begin position="109"/>
        <end position="115"/>
    </location>
    <ligand>
        <name>ATP</name>
        <dbReference type="ChEBI" id="CHEBI:30616"/>
    </ligand>
</feature>
<gene>
    <name evidence="1" type="primary">murC</name>
    <name type="ordered locus">MGAS10270_Spy0287</name>
</gene>
<sequence length="442" mass="49593">MSKTYHFIGIKGSGMSALALMLHQMGHKVQGSDVEKYYFTQRGLEQAGITILPFSEDNITPDMELIVGNAFRENNKEVAYALRHQIPFKRYHDFLGDFMKSFISFAVAGAHGKTSTTGLLSHVLKNITDTSYLIGDGTGRGSANAQYFVFESDEYERHFMPYHPEYSIITNIDFDHPDYFTGIADVRNAFNDYAKQVKKALFVYGEDDELKKIEAPAPIYYYGFEKGNDFIAYDITRTTNGSDFKVKHQGEVIGQFHVPAYGKHNILNATAVIANLFVAGIDMALVADHLKTFSGVKRRFTEKIINDTIIIDDFAHHPTEIVATIDAARQKYPSKEIVAIFQPHTFTRTIALLEDFACALNEADSVYLAQIYGSAREVDKGEVKVEDLAAKIIKPSQVVTVENVSPLLDHDNAVYVFMGAGDIQLYEHSFEELLANLTKNNQ</sequence>